<evidence type="ECO:0000250" key="1">
    <source>
        <dbReference type="UniProtKB" id="A0A0B5AC95"/>
    </source>
</evidence>
<evidence type="ECO:0000250" key="2">
    <source>
        <dbReference type="UniProtKB" id="Q9NDE7"/>
    </source>
</evidence>
<evidence type="ECO:0000255" key="3"/>
<evidence type="ECO:0000256" key="4">
    <source>
        <dbReference type="SAM" id="MobiDB-lite"/>
    </source>
</evidence>
<evidence type="ECO:0000303" key="5">
    <source>
    </source>
</evidence>
<evidence type="ECO:0000305" key="6"/>
<evidence type="ECO:0000305" key="7">
    <source>
    </source>
</evidence>
<evidence type="ECO:0000312" key="8">
    <source>
        <dbReference type="EMBL" id="AJD85826.1"/>
    </source>
</evidence>
<feature type="signal peptide" evidence="3">
    <location>
        <begin position="1"/>
        <end position="24"/>
    </location>
</feature>
<feature type="peptide" id="PRO_5002112062" description="Con-Ins G2 B chain">
    <location>
        <begin position="25"/>
        <end position="58"/>
    </location>
</feature>
<feature type="propeptide" id="PRO_0000439316" description="C peptide" evidence="7">
    <location>
        <begin position="59"/>
        <end position="92"/>
    </location>
</feature>
<feature type="peptide" id="PRO_0000439317" description="Con-Ins G2 A chain" evidence="2 7">
    <location>
        <begin position="93"/>
        <end position="130"/>
    </location>
</feature>
<feature type="region of interest" description="Disordered" evidence="4">
    <location>
        <begin position="54"/>
        <end position="74"/>
    </location>
</feature>
<feature type="modified residue" description="4-hydroxyproline; partial" evidence="1">
    <location>
        <position position="34"/>
    </location>
</feature>
<feature type="modified residue" description="4-carboxyglutamate; partial" evidence="1">
    <location>
        <position position="111"/>
    </location>
</feature>
<feature type="disulfide bond" evidence="6">
    <location>
        <begin position="29"/>
        <end position="100"/>
    </location>
</feature>
<feature type="disulfide bond" description="Interchain (between B and A chains)" evidence="1">
    <location>
        <begin position="41"/>
        <end position="103"/>
    </location>
</feature>
<feature type="disulfide bond" description="Interchain (between B and A chains)" evidence="1">
    <location>
        <begin position="53"/>
        <end position="116"/>
    </location>
</feature>
<feature type="disulfide bond" evidence="1">
    <location>
        <begin position="102"/>
        <end position="107"/>
    </location>
</feature>
<organism>
    <name type="scientific">Conus geographus</name>
    <name type="common">Geography cone</name>
    <name type="synonym">Nubecula geographus</name>
    <dbReference type="NCBI Taxonomy" id="6491"/>
    <lineage>
        <taxon>Eukaryota</taxon>
        <taxon>Metazoa</taxon>
        <taxon>Spiralia</taxon>
        <taxon>Lophotrochozoa</taxon>
        <taxon>Mollusca</taxon>
        <taxon>Gastropoda</taxon>
        <taxon>Caenogastropoda</taxon>
        <taxon>Neogastropoda</taxon>
        <taxon>Conoidea</taxon>
        <taxon>Conidae</taxon>
        <taxon>Conus</taxon>
        <taxon>Gastridium</taxon>
    </lineage>
</organism>
<protein>
    <recommendedName>
        <fullName evidence="5">Con-Ins G2</fullName>
    </recommendedName>
    <alternativeName>
        <fullName evidence="8">Insulin 2</fullName>
    </alternativeName>
    <component>
        <recommendedName>
            <fullName evidence="5">Con-Ins G2 B chain</fullName>
        </recommendedName>
    </component>
    <component>
        <recommendedName>
            <fullName evidence="5">Con-Ins G2 A chain</fullName>
        </recommendedName>
    </component>
</protein>
<proteinExistence type="evidence at transcript level"/>
<comment type="function">
    <text evidence="1">This venom insulin, from a fish-hunting cone snail, facilitates prey capture by rapidly inducing hypoglycemic shock. Intraperitoneal injection of this peptide into zebrafish lowers blood glucose with the same potency than human insulin. In vivo, when applied to water, this peptide reduces overall locomotor activity of zebrafish larvae, observed as a significant decrease in the percentage of time spent swimming and movement frequency.</text>
</comment>
<comment type="subunit">
    <text evidence="1">Heterodimer of A and B chains; disulfide-linked.</text>
</comment>
<comment type="subcellular location">
    <subcellularLocation>
        <location evidence="1">Secreted</location>
    </subcellularLocation>
</comment>
<comment type="tissue specificity">
    <text evidence="7">Expressed by the venom gland.</text>
</comment>
<comment type="miscellaneous">
    <text evidence="7">Venom insulins constitute about 1/25 of the total venom of C.geographus.</text>
</comment>
<comment type="similarity">
    <text>Belongs to the insulin family.</text>
</comment>
<accession>A0A0B5ABD9</accession>
<name>INS2A_CONGE</name>
<reference key="1">
    <citation type="journal article" date="2015" name="Proc. Natl. Acad. Sci. U.S.A.">
        <title>Specialized insulin is used for chemical warfare by fish-hunting cone snails.</title>
        <authorList>
            <person name="Safavi-Hemami H."/>
            <person name="Gajewiak J."/>
            <person name="Karanth S."/>
            <person name="Robinson S.D."/>
            <person name="Ueberheide B."/>
            <person name="Douglass A.D."/>
            <person name="Schlegel A."/>
            <person name="Imperial J.S."/>
            <person name="Watkins M."/>
            <person name="Bandyopadhyay P.K."/>
            <person name="Yandell M."/>
            <person name="Li Q."/>
            <person name="Purcell A.W."/>
            <person name="Norton R.S."/>
            <person name="Ellgaard L."/>
            <person name="Olivera B.M."/>
        </authorList>
    </citation>
    <scope>NUCLEOTIDE SEQUENCE [MRNA]</scope>
    <source>
        <tissue>Venom gland</tissue>
    </source>
</reference>
<dbReference type="EMBL" id="KP268610">
    <property type="protein sequence ID" value="AJD85826.1"/>
    <property type="molecule type" value="mRNA"/>
</dbReference>
<dbReference type="GO" id="GO:0005576">
    <property type="term" value="C:extracellular region"/>
    <property type="evidence" value="ECO:0007669"/>
    <property type="project" value="UniProtKB-SubCell"/>
</dbReference>
<dbReference type="GO" id="GO:0005179">
    <property type="term" value="F:hormone activity"/>
    <property type="evidence" value="ECO:0007669"/>
    <property type="project" value="UniProtKB-KW"/>
</dbReference>
<dbReference type="GO" id="GO:0090729">
    <property type="term" value="F:toxin activity"/>
    <property type="evidence" value="ECO:0007669"/>
    <property type="project" value="UniProtKB-KW"/>
</dbReference>
<dbReference type="GO" id="GO:0006006">
    <property type="term" value="P:glucose metabolic process"/>
    <property type="evidence" value="ECO:0007669"/>
    <property type="project" value="UniProtKB-KW"/>
</dbReference>
<dbReference type="CDD" id="cd00101">
    <property type="entry name" value="IlGF_like"/>
    <property type="match status" value="1"/>
</dbReference>
<dbReference type="Gene3D" id="1.10.100.10">
    <property type="entry name" value="Insulin-like"/>
    <property type="match status" value="1"/>
</dbReference>
<dbReference type="InterPro" id="IPR036438">
    <property type="entry name" value="Insulin-like_sf"/>
</dbReference>
<dbReference type="InterPro" id="IPR016724">
    <property type="entry name" value="Insulin-rel_pep"/>
</dbReference>
<dbReference type="InterPro" id="IPR022353">
    <property type="entry name" value="Insulin_CS"/>
</dbReference>
<dbReference type="PIRSF" id="PIRSF018431">
    <property type="entry name" value="Molluscan_insulin_rel_peptide"/>
    <property type="match status" value="1"/>
</dbReference>
<dbReference type="SUPFAM" id="SSF56994">
    <property type="entry name" value="Insulin-like"/>
    <property type="match status" value="1"/>
</dbReference>
<dbReference type="PROSITE" id="PS00262">
    <property type="entry name" value="INSULIN"/>
    <property type="match status" value="1"/>
</dbReference>
<sequence length="130" mass="14673">MTTSSYFLLVALGLLLYVRQSFSTHEHTCQLDDPAHPQGKCGSDLVNYHEEKCEEEEARRGGTNDGGKKRRRASPLWKRRRFLSMLKARAKRTGYKGIACECCQHYCTDQEFINYCPPVTESSSSSSSAA</sequence>
<keyword id="KW-0119">Carbohydrate metabolism</keyword>
<keyword id="KW-0165">Cleavage on pair of basic residues</keyword>
<keyword id="KW-1015">Disulfide bond</keyword>
<keyword id="KW-0301">Gamma-carboxyglutamic acid</keyword>
<keyword id="KW-0313">Glucose metabolism</keyword>
<keyword id="KW-0372">Hormone</keyword>
<keyword id="KW-0379">Hydroxylation</keyword>
<keyword id="KW-0964">Secreted</keyword>
<keyword id="KW-0732">Signal</keyword>
<keyword id="KW-0800">Toxin</keyword>